<protein>
    <recommendedName>
        <fullName evidence="1">3-isopropylmalate dehydrogenase</fullName>
        <ecNumber evidence="1">1.1.1.85</ecNumber>
    </recommendedName>
    <alternativeName>
        <fullName evidence="1">3-IPM-DH</fullName>
    </alternativeName>
    <alternativeName>
        <fullName evidence="1">Beta-IPM dehydrogenase</fullName>
        <shortName evidence="1">IMDH</shortName>
    </alternativeName>
</protein>
<keyword id="KW-0028">Amino-acid biosynthesis</keyword>
<keyword id="KW-0100">Branched-chain amino acid biosynthesis</keyword>
<keyword id="KW-0963">Cytoplasm</keyword>
<keyword id="KW-0432">Leucine biosynthesis</keyword>
<keyword id="KW-0460">Magnesium</keyword>
<keyword id="KW-0464">Manganese</keyword>
<keyword id="KW-0479">Metal-binding</keyword>
<keyword id="KW-0520">NAD</keyword>
<keyword id="KW-0560">Oxidoreductase</keyword>
<keyword id="KW-1185">Reference proteome</keyword>
<evidence type="ECO:0000255" key="1">
    <source>
        <dbReference type="HAMAP-Rule" id="MF_01033"/>
    </source>
</evidence>
<accession>Q3AYS1</accession>
<feature type="chain" id="PRO_0000250143" description="3-isopropylmalate dehydrogenase">
    <location>
        <begin position="1"/>
        <end position="357"/>
    </location>
</feature>
<feature type="binding site" evidence="1">
    <location>
        <position position="97"/>
    </location>
    <ligand>
        <name>substrate</name>
    </ligand>
</feature>
<feature type="binding site" evidence="1">
    <location>
        <position position="107"/>
    </location>
    <ligand>
        <name>substrate</name>
    </ligand>
</feature>
<feature type="binding site" evidence="1">
    <location>
        <position position="135"/>
    </location>
    <ligand>
        <name>substrate</name>
    </ligand>
</feature>
<feature type="binding site" evidence="1">
    <location>
        <position position="224"/>
    </location>
    <ligand>
        <name>Mg(2+)</name>
        <dbReference type="ChEBI" id="CHEBI:18420"/>
    </ligand>
</feature>
<feature type="binding site" evidence="1">
    <location>
        <position position="224"/>
    </location>
    <ligand>
        <name>substrate</name>
    </ligand>
</feature>
<feature type="binding site" evidence="1">
    <location>
        <position position="248"/>
    </location>
    <ligand>
        <name>Mg(2+)</name>
        <dbReference type="ChEBI" id="CHEBI:18420"/>
    </ligand>
</feature>
<feature type="binding site" evidence="1">
    <location>
        <position position="252"/>
    </location>
    <ligand>
        <name>Mg(2+)</name>
        <dbReference type="ChEBI" id="CHEBI:18420"/>
    </ligand>
</feature>
<feature type="binding site" evidence="1">
    <location>
        <begin position="282"/>
        <end position="294"/>
    </location>
    <ligand>
        <name>NAD(+)</name>
        <dbReference type="ChEBI" id="CHEBI:57540"/>
    </ligand>
</feature>
<feature type="site" description="Important for catalysis" evidence="1">
    <location>
        <position position="142"/>
    </location>
</feature>
<feature type="site" description="Important for catalysis" evidence="1">
    <location>
        <position position="192"/>
    </location>
</feature>
<dbReference type="EC" id="1.1.1.85" evidence="1"/>
<dbReference type="EMBL" id="CP000097">
    <property type="protein sequence ID" value="ABB25756.1"/>
    <property type="molecule type" value="Genomic_DNA"/>
</dbReference>
<dbReference type="RefSeq" id="WP_011359596.1">
    <property type="nucleotide sequence ID" value="NC_007513.1"/>
</dbReference>
<dbReference type="SMR" id="Q3AYS1"/>
<dbReference type="STRING" id="316279.Syncc9902_0788"/>
<dbReference type="KEGG" id="sye:Syncc9902_0788"/>
<dbReference type="eggNOG" id="COG0473">
    <property type="taxonomic scope" value="Bacteria"/>
</dbReference>
<dbReference type="HOGENOM" id="CLU_031953_0_3_3"/>
<dbReference type="OrthoDB" id="9806254at2"/>
<dbReference type="UniPathway" id="UPA00048">
    <property type="reaction ID" value="UER00072"/>
</dbReference>
<dbReference type="Proteomes" id="UP000002712">
    <property type="component" value="Chromosome"/>
</dbReference>
<dbReference type="GO" id="GO:0005829">
    <property type="term" value="C:cytosol"/>
    <property type="evidence" value="ECO:0007669"/>
    <property type="project" value="TreeGrafter"/>
</dbReference>
<dbReference type="GO" id="GO:0003862">
    <property type="term" value="F:3-isopropylmalate dehydrogenase activity"/>
    <property type="evidence" value="ECO:0007669"/>
    <property type="project" value="UniProtKB-UniRule"/>
</dbReference>
<dbReference type="GO" id="GO:0000287">
    <property type="term" value="F:magnesium ion binding"/>
    <property type="evidence" value="ECO:0007669"/>
    <property type="project" value="InterPro"/>
</dbReference>
<dbReference type="GO" id="GO:0051287">
    <property type="term" value="F:NAD binding"/>
    <property type="evidence" value="ECO:0007669"/>
    <property type="project" value="InterPro"/>
</dbReference>
<dbReference type="GO" id="GO:0009098">
    <property type="term" value="P:L-leucine biosynthetic process"/>
    <property type="evidence" value="ECO:0007669"/>
    <property type="project" value="UniProtKB-UniRule"/>
</dbReference>
<dbReference type="FunFam" id="3.40.718.10:FF:000028">
    <property type="entry name" value="3-isopropylmalate dehydrogenase"/>
    <property type="match status" value="1"/>
</dbReference>
<dbReference type="Gene3D" id="3.40.718.10">
    <property type="entry name" value="Isopropylmalate Dehydrogenase"/>
    <property type="match status" value="1"/>
</dbReference>
<dbReference type="HAMAP" id="MF_01033">
    <property type="entry name" value="LeuB_type1"/>
    <property type="match status" value="1"/>
</dbReference>
<dbReference type="InterPro" id="IPR019818">
    <property type="entry name" value="IsoCit/isopropylmalate_DH_CS"/>
</dbReference>
<dbReference type="InterPro" id="IPR024084">
    <property type="entry name" value="IsoPropMal-DH-like_dom"/>
</dbReference>
<dbReference type="InterPro" id="IPR004429">
    <property type="entry name" value="Isopropylmalate_DH"/>
</dbReference>
<dbReference type="NCBIfam" id="TIGR00169">
    <property type="entry name" value="leuB"/>
    <property type="match status" value="1"/>
</dbReference>
<dbReference type="PANTHER" id="PTHR42979">
    <property type="entry name" value="3-ISOPROPYLMALATE DEHYDROGENASE"/>
    <property type="match status" value="1"/>
</dbReference>
<dbReference type="PANTHER" id="PTHR42979:SF1">
    <property type="entry name" value="3-ISOPROPYLMALATE DEHYDROGENASE"/>
    <property type="match status" value="1"/>
</dbReference>
<dbReference type="Pfam" id="PF00180">
    <property type="entry name" value="Iso_dh"/>
    <property type="match status" value="1"/>
</dbReference>
<dbReference type="SMART" id="SM01329">
    <property type="entry name" value="Iso_dh"/>
    <property type="match status" value="1"/>
</dbReference>
<dbReference type="SUPFAM" id="SSF53659">
    <property type="entry name" value="Isocitrate/Isopropylmalate dehydrogenase-like"/>
    <property type="match status" value="1"/>
</dbReference>
<dbReference type="PROSITE" id="PS00470">
    <property type="entry name" value="IDH_IMDH"/>
    <property type="match status" value="1"/>
</dbReference>
<reference key="1">
    <citation type="submission" date="2005-08" db="EMBL/GenBank/DDBJ databases">
        <title>Complete sequence of Synechococcus sp. CC9902.</title>
        <authorList>
            <person name="Copeland A."/>
            <person name="Lucas S."/>
            <person name="Lapidus A."/>
            <person name="Barry K."/>
            <person name="Detter J.C."/>
            <person name="Glavina T."/>
            <person name="Hammon N."/>
            <person name="Israni S."/>
            <person name="Pitluck S."/>
            <person name="Martinez M."/>
            <person name="Schmutz J."/>
            <person name="Larimer F."/>
            <person name="Land M."/>
            <person name="Kyrpides N."/>
            <person name="Ivanova N."/>
            <person name="Richardson P."/>
        </authorList>
    </citation>
    <scope>NUCLEOTIDE SEQUENCE [LARGE SCALE GENOMIC DNA]</scope>
    <source>
        <strain>CC9902</strain>
    </source>
</reference>
<name>LEU3_SYNS9</name>
<gene>
    <name evidence="1" type="primary">leuB</name>
    <name type="ordered locus">Syncc9902_0788</name>
</gene>
<sequence>MAQYRVVLLPGDGIGPEITAVARQLLDVVAQRHGFQLMFEEQPIGGSAIDATGEPLPASTLTACRSADAVLLAAIGSPRFDSLPREKRPETGLLGLRSGLELFANLRPVKIVPALIGASSLKQEVIEGVDLMVVRELTGGIYFGQPKGRIEADGDERGFNTMTYSASEVDRIAKVAFEIAGERNNRLCSVDKANVLDVSQLWRDRVDAMAPRYGEVDVSHMYVDNAAMQLVRDPRQFDVLLTGNLFGDILSDEAAMLTGSIGMLPSASLGSDGPGLFEPVHGSAPDIAGQDKANPMAMVLSAAMMLRIGLKQSSAADDLERAVDAVLASGFRTGDLMSEGCTPLGCQAMGEQLLKAL</sequence>
<proteinExistence type="inferred from homology"/>
<comment type="function">
    <text evidence="1">Catalyzes the oxidation of 3-carboxy-2-hydroxy-4-methylpentanoate (3-isopropylmalate) to 3-carboxy-4-methyl-2-oxopentanoate. The product decarboxylates to 4-methyl-2 oxopentanoate.</text>
</comment>
<comment type="catalytic activity">
    <reaction evidence="1">
        <text>(2R,3S)-3-isopropylmalate + NAD(+) = 4-methyl-2-oxopentanoate + CO2 + NADH</text>
        <dbReference type="Rhea" id="RHEA:32271"/>
        <dbReference type="ChEBI" id="CHEBI:16526"/>
        <dbReference type="ChEBI" id="CHEBI:17865"/>
        <dbReference type="ChEBI" id="CHEBI:35121"/>
        <dbReference type="ChEBI" id="CHEBI:57540"/>
        <dbReference type="ChEBI" id="CHEBI:57945"/>
        <dbReference type="EC" id="1.1.1.85"/>
    </reaction>
</comment>
<comment type="cofactor">
    <cofactor evidence="1">
        <name>Mg(2+)</name>
        <dbReference type="ChEBI" id="CHEBI:18420"/>
    </cofactor>
    <cofactor evidence="1">
        <name>Mn(2+)</name>
        <dbReference type="ChEBI" id="CHEBI:29035"/>
    </cofactor>
    <text evidence="1">Binds 1 Mg(2+) or Mn(2+) ion per subunit.</text>
</comment>
<comment type="pathway">
    <text evidence="1">Amino-acid biosynthesis; L-leucine biosynthesis; L-leucine from 3-methyl-2-oxobutanoate: step 3/4.</text>
</comment>
<comment type="subunit">
    <text evidence="1">Homodimer.</text>
</comment>
<comment type="subcellular location">
    <subcellularLocation>
        <location evidence="1">Cytoplasm</location>
    </subcellularLocation>
</comment>
<comment type="similarity">
    <text evidence="1">Belongs to the isocitrate and isopropylmalate dehydrogenases family. LeuB type 1 subfamily.</text>
</comment>
<organism>
    <name type="scientific">Synechococcus sp. (strain CC9902)</name>
    <dbReference type="NCBI Taxonomy" id="316279"/>
    <lineage>
        <taxon>Bacteria</taxon>
        <taxon>Bacillati</taxon>
        <taxon>Cyanobacteriota</taxon>
        <taxon>Cyanophyceae</taxon>
        <taxon>Synechococcales</taxon>
        <taxon>Synechococcaceae</taxon>
        <taxon>Synechococcus</taxon>
    </lineage>
</organism>